<accession>Q28LC5</accession>
<organism>
    <name type="scientific">Jannaschia sp. (strain CCS1)</name>
    <dbReference type="NCBI Taxonomy" id="290400"/>
    <lineage>
        <taxon>Bacteria</taxon>
        <taxon>Pseudomonadati</taxon>
        <taxon>Pseudomonadota</taxon>
        <taxon>Alphaproteobacteria</taxon>
        <taxon>Rhodobacterales</taxon>
        <taxon>Roseobacteraceae</taxon>
        <taxon>Jannaschia</taxon>
    </lineage>
</organism>
<comment type="subcellular location">
    <subcellularLocation>
        <location evidence="1">Cell membrane</location>
        <topology evidence="1">Multi-pass membrane protein</topology>
    </subcellularLocation>
</comment>
<comment type="similarity">
    <text evidence="1">Belongs to the UPF0391 family.</text>
</comment>
<name>Y3570_JANSC</name>
<gene>
    <name type="ordered locus">Jann_3570</name>
</gene>
<reference key="1">
    <citation type="submission" date="2006-02" db="EMBL/GenBank/DDBJ databases">
        <title>Complete sequence of chromosome of Jannaschia sp. CCS1.</title>
        <authorList>
            <consortium name="US DOE Joint Genome Institute"/>
            <person name="Copeland A."/>
            <person name="Lucas S."/>
            <person name="Lapidus A."/>
            <person name="Barry K."/>
            <person name="Detter J.C."/>
            <person name="Glavina del Rio T."/>
            <person name="Hammon N."/>
            <person name="Israni S."/>
            <person name="Pitluck S."/>
            <person name="Brettin T."/>
            <person name="Bruce D."/>
            <person name="Han C."/>
            <person name="Tapia R."/>
            <person name="Gilna P."/>
            <person name="Chertkov O."/>
            <person name="Saunders E."/>
            <person name="Schmutz J."/>
            <person name="Larimer F."/>
            <person name="Land M."/>
            <person name="Kyrpides N."/>
            <person name="Lykidis A."/>
            <person name="Moran M.A."/>
            <person name="Belas R."/>
            <person name="Ye W."/>
            <person name="Buchan A."/>
            <person name="Gonzalez J.M."/>
            <person name="Schell M.A."/>
            <person name="Richardson P."/>
        </authorList>
    </citation>
    <scope>NUCLEOTIDE SEQUENCE [LARGE SCALE GENOMIC DNA]</scope>
    <source>
        <strain>CCS1</strain>
    </source>
</reference>
<sequence length="56" mass="5729">MLRWAVTFLIIALIAALFGFGGIAGASAGIAQILFFVFIALFAISLVARGLSGPSS</sequence>
<evidence type="ECO:0000255" key="1">
    <source>
        <dbReference type="HAMAP-Rule" id="MF_01361"/>
    </source>
</evidence>
<proteinExistence type="inferred from homology"/>
<feature type="chain" id="PRO_0000256742" description="UPF0391 membrane protein Jann_3570">
    <location>
        <begin position="1"/>
        <end position="56"/>
    </location>
</feature>
<feature type="transmembrane region" description="Helical" evidence="1">
    <location>
        <begin position="4"/>
        <end position="24"/>
    </location>
</feature>
<feature type="transmembrane region" description="Helical" evidence="1">
    <location>
        <begin position="29"/>
        <end position="48"/>
    </location>
</feature>
<keyword id="KW-1003">Cell membrane</keyword>
<keyword id="KW-0472">Membrane</keyword>
<keyword id="KW-1185">Reference proteome</keyword>
<keyword id="KW-0812">Transmembrane</keyword>
<keyword id="KW-1133">Transmembrane helix</keyword>
<protein>
    <recommendedName>
        <fullName evidence="1">UPF0391 membrane protein Jann_3570</fullName>
    </recommendedName>
</protein>
<dbReference type="EMBL" id="CP000264">
    <property type="protein sequence ID" value="ABD56487.1"/>
    <property type="molecule type" value="Genomic_DNA"/>
</dbReference>
<dbReference type="RefSeq" id="WP_011456687.1">
    <property type="nucleotide sequence ID" value="NC_007802.1"/>
</dbReference>
<dbReference type="STRING" id="290400.Jann_3570"/>
<dbReference type="KEGG" id="jan:Jann_3570"/>
<dbReference type="eggNOG" id="COG5487">
    <property type="taxonomic scope" value="Bacteria"/>
</dbReference>
<dbReference type="HOGENOM" id="CLU_187346_1_0_5"/>
<dbReference type="Proteomes" id="UP000008326">
    <property type="component" value="Chromosome"/>
</dbReference>
<dbReference type="GO" id="GO:0005886">
    <property type="term" value="C:plasma membrane"/>
    <property type="evidence" value="ECO:0007669"/>
    <property type="project" value="UniProtKB-SubCell"/>
</dbReference>
<dbReference type="HAMAP" id="MF_01361">
    <property type="entry name" value="UPF0391"/>
    <property type="match status" value="1"/>
</dbReference>
<dbReference type="InterPro" id="IPR009760">
    <property type="entry name" value="DUF1328"/>
</dbReference>
<dbReference type="NCBIfam" id="NF010226">
    <property type="entry name" value="PRK13682.1-1"/>
    <property type="match status" value="1"/>
</dbReference>
<dbReference type="NCBIfam" id="NF010228">
    <property type="entry name" value="PRK13682.1-3"/>
    <property type="match status" value="1"/>
</dbReference>
<dbReference type="NCBIfam" id="NF010229">
    <property type="entry name" value="PRK13682.1-4"/>
    <property type="match status" value="1"/>
</dbReference>
<dbReference type="Pfam" id="PF07043">
    <property type="entry name" value="DUF1328"/>
    <property type="match status" value="1"/>
</dbReference>
<dbReference type="PIRSF" id="PIRSF036466">
    <property type="entry name" value="UCP036466"/>
    <property type="match status" value="1"/>
</dbReference>